<evidence type="ECO:0000250" key="1">
    <source>
        <dbReference type="UniProtKB" id="Q86QT3"/>
    </source>
</evidence>
<evidence type="ECO:0000269" key="2">
    <source>
    </source>
</evidence>
<evidence type="ECO:0000303" key="3">
    <source>
    </source>
</evidence>
<evidence type="ECO:0000305" key="4"/>
<evidence type="ECO:0000305" key="5">
    <source>
    </source>
</evidence>
<feature type="chain" id="PRO_0000454472" description="Potassium channel toxin gamma-KTx 1.10">
    <location>
        <begin position="1"/>
        <end position="42"/>
    </location>
</feature>
<feature type="disulfide bond" evidence="1">
    <location>
        <begin position="5"/>
        <end position="23"/>
    </location>
</feature>
<feature type="disulfide bond" evidence="1">
    <location>
        <begin position="11"/>
        <end position="34"/>
    </location>
</feature>
<feature type="disulfide bond" evidence="1">
    <location>
        <begin position="20"/>
        <end position="39"/>
    </location>
</feature>
<feature type="disulfide bond" evidence="1">
    <location>
        <begin position="24"/>
        <end position="41"/>
    </location>
</feature>
<sequence length="42" mass="4802">DRDSCVDKSRCAKYGYFQECTDCCKKYGHNGGTCMFFKCKCA</sequence>
<name>KGX1A_CENMA</name>
<accession>C0HLM3</accession>
<protein>
    <recommendedName>
        <fullName evidence="3">Potassium channel toxin gamma-KTx 1.10</fullName>
        <shortName evidence="3">CmERG1</shortName>
    </recommendedName>
</protein>
<keyword id="KW-0903">Direct protein sequencing</keyword>
<keyword id="KW-1015">Disulfide bond</keyword>
<keyword id="KW-0872">Ion channel impairing toxin</keyword>
<keyword id="KW-0528">Neurotoxin</keyword>
<keyword id="KW-0632">Potassium channel impairing toxin</keyword>
<keyword id="KW-0964">Secreted</keyword>
<keyword id="KW-0800">Toxin</keyword>
<keyword id="KW-1220">Voltage-gated potassium channel impairing toxin</keyword>
<proteinExistence type="evidence at protein level"/>
<comment type="function">
    <text evidence="2">Blocks human Kv11.1/KCNH2/ERG1 potassium channels (reversible, IC(50)=3.4 nM) (PubMed:34201318). At high toxin concentrations, block of Kv11.1/KCNH2/ERG1 macroscopic current is almost complete (PubMed:34201318). Does not accelerate the kinetics of the closing process and has no effect on the activation and inactivation kinetics of the Kv11.1/KCNH2/ERG1 channels (PubMed:34201318).</text>
</comment>
<comment type="subcellular location">
    <subcellularLocation>
        <location evidence="2">Secreted</location>
    </subcellularLocation>
</comment>
<comment type="tissue specificity">
    <text evidence="5">Expressed by the venom gland.</text>
</comment>
<comment type="domain">
    <text evidence="1">Has the CSalpha/beta fold, which comprises one or two short alpha helices connected to anti-parallel beta-sheets stabilized by three or four disulfide bonds.</text>
</comment>
<comment type="mass spectrometry" mass="4792.88" method="Electrospray" evidence="2"/>
<comment type="similarity">
    <text evidence="4">Belongs to the ergtoxin family. Gamma-KTx 1 subfamily.</text>
</comment>
<organism evidence="3">
    <name type="scientific">Centruroides margaritatus</name>
    <name type="common">Central American bark Scorpion</name>
    <dbReference type="NCBI Taxonomy" id="29018"/>
    <lineage>
        <taxon>Eukaryota</taxon>
        <taxon>Metazoa</taxon>
        <taxon>Ecdysozoa</taxon>
        <taxon>Arthropoda</taxon>
        <taxon>Chelicerata</taxon>
        <taxon>Arachnida</taxon>
        <taxon>Scorpiones</taxon>
        <taxon>Buthida</taxon>
        <taxon>Buthoidea</taxon>
        <taxon>Buthidae</taxon>
        <taxon>Centruroides</taxon>
    </lineage>
</organism>
<reference evidence="4" key="1">
    <citation type="journal article" date="2021" name="Toxins">
        <title>Colombian Scorpion Centruroides margaritatus: Purification and Characterization of a Gamma Potassium Toxin with Full-Block Activity on the hERG1 Channel.</title>
        <authorList>
            <person name="Beltran-Vidal J."/>
            <person name="Carcamo-Noriega E."/>
            <person name="Pastor N."/>
            <person name="Zamudio-Zuniga F."/>
            <person name="Guerrero-Vargas J.A."/>
            <person name="Castano S."/>
            <person name="Possani L.D."/>
            <person name="Restano-Cassulini R."/>
        </authorList>
    </citation>
    <scope>PROTEIN SEQUENCE</scope>
    <scope>NOMENCLATURE</scope>
    <scope>FUNCTION</scope>
    <scope>SUBCELLULAR LOCATION</scope>
    <scope>TISSUE SPECIFICITY</scope>
    <scope>MASS SPECTROMETRY</scope>
    <source>
        <strain evidence="3">Patia Valley</strain>
        <tissue evidence="3">Venom</tissue>
    </source>
</reference>
<dbReference type="SMR" id="C0HLM3"/>
<dbReference type="GO" id="GO:0005576">
    <property type="term" value="C:extracellular region"/>
    <property type="evidence" value="ECO:0000314"/>
    <property type="project" value="UniProtKB"/>
</dbReference>
<dbReference type="GO" id="GO:0140628">
    <property type="term" value="F:outward rectifier potassium channel inhibitor activity"/>
    <property type="evidence" value="ECO:0000314"/>
    <property type="project" value="UniProtKB"/>
</dbReference>
<dbReference type="GO" id="GO:0090729">
    <property type="term" value="F:toxin activity"/>
    <property type="evidence" value="ECO:0000314"/>
    <property type="project" value="UniProtKB"/>
</dbReference>
<dbReference type="GO" id="GO:0044562">
    <property type="term" value="P:envenomation resulting in negative regulation of voltage-gated potassium channel activity in another organism"/>
    <property type="evidence" value="ECO:0000314"/>
    <property type="project" value="UniProtKB"/>
</dbReference>
<dbReference type="Gene3D" id="3.30.30.10">
    <property type="entry name" value="Knottin, scorpion toxin-like"/>
    <property type="match status" value="1"/>
</dbReference>
<dbReference type="InterPro" id="IPR012622">
    <property type="entry name" value="Ergtoxin"/>
</dbReference>
<dbReference type="InterPro" id="IPR036574">
    <property type="entry name" value="Scorpion_toxin-like_sf"/>
</dbReference>
<dbReference type="Pfam" id="PF08086">
    <property type="entry name" value="Toxin_17"/>
    <property type="match status" value="1"/>
</dbReference>
<dbReference type="SUPFAM" id="SSF57095">
    <property type="entry name" value="Scorpion toxin-like"/>
    <property type="match status" value="1"/>
</dbReference>
<dbReference type="PROSITE" id="PS60026">
    <property type="entry name" value="ERGTX"/>
    <property type="match status" value="1"/>
</dbReference>